<proteinExistence type="evidence at protein level"/>
<dbReference type="EMBL" id="AB097052">
    <property type="protein sequence ID" value="BAC77405.1"/>
    <property type="molecule type" value="mRNA"/>
</dbReference>
<dbReference type="EMBL" id="D79996">
    <property type="protein sequence ID" value="BAA11491.2"/>
    <property type="status" value="ALT_INIT"/>
    <property type="molecule type" value="mRNA"/>
</dbReference>
<dbReference type="EMBL" id="AK057258">
    <property type="protein sequence ID" value="BAG51894.1"/>
    <property type="molecule type" value="mRNA"/>
</dbReference>
<dbReference type="EMBL" id="AK293022">
    <property type="protein sequence ID" value="BAF85711.1"/>
    <property type="molecule type" value="mRNA"/>
</dbReference>
<dbReference type="EMBL" id="AK293040">
    <property type="protein sequence ID" value="BAF85729.1"/>
    <property type="molecule type" value="mRNA"/>
</dbReference>
<dbReference type="EMBL" id="AC009127">
    <property type="status" value="NOT_ANNOTATED_CDS"/>
    <property type="molecule type" value="Genomic_DNA"/>
</dbReference>
<dbReference type="EMBL" id="AC010653">
    <property type="status" value="NOT_ANNOTATED_CDS"/>
    <property type="molecule type" value="Genomic_DNA"/>
</dbReference>
<dbReference type="EMBL" id="BC000116">
    <property type="protein sequence ID" value="AAH00116.1"/>
    <property type="molecule type" value="mRNA"/>
</dbReference>
<dbReference type="EMBL" id="BC000430">
    <property type="protein sequence ID" value="AAH00430.1"/>
    <property type="molecule type" value="mRNA"/>
</dbReference>
<dbReference type="EMBL" id="BC004359">
    <property type="protein sequence ID" value="AAH04359.1"/>
    <property type="molecule type" value="mRNA"/>
</dbReference>
<dbReference type="EMBL" id="BC103745">
    <property type="protein sequence ID" value="AAI03746.1"/>
    <property type="molecule type" value="mRNA"/>
</dbReference>
<dbReference type="CCDS" id="CCDS10905.1">
    <molecule id="P53990-3"/>
</dbReference>
<dbReference type="CCDS" id="CCDS59271.1">
    <molecule id="P53990-5"/>
</dbReference>
<dbReference type="CCDS" id="CCDS59272.1">
    <molecule id="P53990-4"/>
</dbReference>
<dbReference type="CCDS" id="CCDS59273.1">
    <molecule id="P53990-2"/>
</dbReference>
<dbReference type="CCDS" id="CCDS59274.1">
    <molecule id="P53990-6"/>
</dbReference>
<dbReference type="RefSeq" id="NP_001257904.1">
    <molecule id="P53990-4"/>
    <property type="nucleotide sequence ID" value="NM_001270975.2"/>
</dbReference>
<dbReference type="RefSeq" id="NP_001257905.1">
    <molecule id="P53990-5"/>
    <property type="nucleotide sequence ID" value="NM_001270976.1"/>
</dbReference>
<dbReference type="RefSeq" id="NP_001257906.1">
    <molecule id="P53990-2"/>
    <property type="nucleotide sequence ID" value="NM_001270977.2"/>
</dbReference>
<dbReference type="RefSeq" id="NP_001257907.1">
    <molecule id="P53990-6"/>
    <property type="nucleotide sequence ID" value="NM_001270978.2"/>
</dbReference>
<dbReference type="RefSeq" id="NP_001257908.1">
    <molecule id="P53990-6"/>
    <property type="nucleotide sequence ID" value="NM_001270979.1"/>
</dbReference>
<dbReference type="RefSeq" id="NP_055576.2">
    <molecule id="P53990-3"/>
    <property type="nucleotide sequence ID" value="NM_014761.3"/>
</dbReference>
<dbReference type="PDB" id="3FRR">
    <property type="method" value="X-ray"/>
    <property type="resolution" value="1.80 A"/>
    <property type="chains" value="A=1-189"/>
</dbReference>
<dbReference type="PDB" id="3FRS">
    <property type="method" value="X-ray"/>
    <property type="resolution" value="2.61 A"/>
    <property type="chains" value="A=5-189"/>
</dbReference>
<dbReference type="PDB" id="3JC1">
    <property type="method" value="EM"/>
    <property type="resolution" value="4.00 A"/>
    <property type="chains" value="Aa/Ac/Ae/Ag/Ai/Ak/Am/Ao/Aq/As/Au/Aw/Ay/Ba/Bc/Be/Bg/Bi/Bk/Bm/Bo/Bq/Bs/Bu/Bw/By/Ca/Cc/Ce/Cg=6-187"/>
</dbReference>
<dbReference type="PDB" id="4U7E">
    <property type="method" value="X-ray"/>
    <property type="resolution" value="1.60 A"/>
    <property type="chains" value="A=341-364"/>
</dbReference>
<dbReference type="PDB" id="4U7I">
    <property type="method" value="X-ray"/>
    <property type="resolution" value="1.79 A"/>
    <property type="chains" value="B=341-364"/>
</dbReference>
<dbReference type="PDB" id="4U7Y">
    <property type="method" value="X-ray"/>
    <property type="resolution" value="2.50 A"/>
    <property type="chains" value="B=341-364"/>
</dbReference>
<dbReference type="PDB" id="4WZX">
    <property type="method" value="X-ray"/>
    <property type="resolution" value="1.39 A"/>
    <property type="chains" value="E=342-364"/>
</dbReference>
<dbReference type="PDB" id="6E8G">
    <property type="method" value="EM"/>
    <property type="resolution" value="2.90 A"/>
    <property type="chains" value="A/BA/BB/C/DA/DB/E/FA/FB/G/HA/HB/I/JA/JB/K/LA/LB/M/NA/NB/O/PA/PB/Q/RA/RB/S/TA/TB=1-364"/>
</dbReference>
<dbReference type="PDB" id="6TZ4">
    <property type="method" value="EM"/>
    <property type="resolution" value="3.20 A"/>
    <property type="chains" value="01/AA/AB/B/CA/CB/D/EA/EB/F/GA/GB/H/IA/IB/J/KA/KB/L/MA/MB/N/OA/OB/P/QA/QB/R/SA/SB=1-189"/>
</dbReference>
<dbReference type="PDB" id="6TZ5">
    <property type="method" value="EM"/>
    <property type="resolution" value="3.10 A"/>
    <property type="chains" value="A/BA/BB/C/DA/DB/E/FA/FB/G/HA/HB/I/JA/JB/K/LA/LB/M/NA/NB/O/PA/PB/Q/RA/S/TA/V/VA=1-189"/>
</dbReference>
<dbReference type="PDB" id="6TZA">
    <property type="method" value="EM"/>
    <property type="resolution" value="7.20 A"/>
    <property type="chains" value="A/B/C/D/E/F/G/H/I/J/K/L/M/N=1-189"/>
</dbReference>
<dbReference type="PDB" id="7S7J">
    <property type="method" value="X-ray"/>
    <property type="resolution" value="1.15 A"/>
    <property type="chains" value="B=342-364"/>
</dbReference>
<dbReference type="PDB" id="8UC6">
    <property type="method" value="X-ray"/>
    <property type="resolution" value="2.70 A"/>
    <property type="chains" value="E/G=320-364"/>
</dbReference>
<dbReference type="PDB" id="8V2Q">
    <property type="method" value="EM"/>
    <property type="resolution" value="2.95 A"/>
    <property type="chains" value="B=1-364"/>
</dbReference>
<dbReference type="PDB" id="8V2R">
    <property type="method" value="EM"/>
    <property type="resolution" value="3.01 A"/>
    <property type="chains" value="B=1-364"/>
</dbReference>
<dbReference type="PDB" id="8V2S">
    <property type="method" value="EM"/>
    <property type="resolution" value="2.72 A"/>
    <property type="chains" value="B=1-364"/>
</dbReference>
<dbReference type="PDBsum" id="3FRR"/>
<dbReference type="PDBsum" id="3FRS"/>
<dbReference type="PDBsum" id="3JC1"/>
<dbReference type="PDBsum" id="4U7E"/>
<dbReference type="PDBsum" id="4U7I"/>
<dbReference type="PDBsum" id="4U7Y"/>
<dbReference type="PDBsum" id="4WZX"/>
<dbReference type="PDBsum" id="6E8G"/>
<dbReference type="PDBsum" id="6TZ4"/>
<dbReference type="PDBsum" id="6TZ5"/>
<dbReference type="PDBsum" id="6TZA"/>
<dbReference type="PDBsum" id="7S7J"/>
<dbReference type="PDBsum" id="8UC6"/>
<dbReference type="PDBsum" id="8V2Q"/>
<dbReference type="PDBsum" id="8V2R"/>
<dbReference type="PDBsum" id="8V2S"/>
<dbReference type="EMDB" id="EMD-20588"/>
<dbReference type="EMDB" id="EMD-20589"/>
<dbReference type="EMDB" id="EMD-20591"/>
<dbReference type="EMDB" id="EMD-27991"/>
<dbReference type="EMDB" id="EMD-28694"/>
<dbReference type="EMDB" id="EMD-28695"/>
<dbReference type="EMDB" id="EMD-28696"/>
<dbReference type="EMDB" id="EMD-28697"/>
<dbReference type="EMDB" id="EMD-28698"/>
<dbReference type="EMDB" id="EMD-28699"/>
<dbReference type="EMDB" id="EMD-28700"/>
<dbReference type="EMDB" id="EMD-28701"/>
<dbReference type="EMDB" id="EMD-28702"/>
<dbReference type="EMDB" id="EMD-28703"/>
<dbReference type="EMDB" id="EMD-28704"/>
<dbReference type="EMDB" id="EMD-28705"/>
<dbReference type="EMDB" id="EMD-28706"/>
<dbReference type="EMDB" id="EMD-28707"/>
<dbReference type="EMDB" id="EMD-28708"/>
<dbReference type="EMDB" id="EMD-28709"/>
<dbReference type="EMDB" id="EMD-28710"/>
<dbReference type="EMDB" id="EMD-28711"/>
<dbReference type="EMDB" id="EMD-28712"/>
<dbReference type="EMDB" id="EMD-28713"/>
<dbReference type="EMDB" id="EMD-28714"/>
<dbReference type="EMDB" id="EMD-28715"/>
<dbReference type="EMDB" id="EMD-28716"/>
<dbReference type="EMDB" id="EMD-28717"/>
<dbReference type="EMDB" id="EMD-28718"/>
<dbReference type="EMDB" id="EMD-28719"/>
<dbReference type="EMDB" id="EMD-28722"/>
<dbReference type="EMDB" id="EMD-42923"/>
<dbReference type="EMDB" id="EMD-42925"/>
<dbReference type="EMDB" id="EMD-42926"/>
<dbReference type="EMDB" id="EMD-42927"/>
<dbReference type="EMDB" id="EMD-42928"/>
<dbReference type="EMDB" id="EMD-42929"/>
<dbReference type="EMDB" id="EMD-42930"/>
<dbReference type="EMDB" id="EMD-42931"/>
<dbReference type="EMDB" id="EMD-42932"/>
<dbReference type="EMDB" id="EMD-42933"/>
<dbReference type="EMDB" id="EMD-42934"/>
<dbReference type="EMDB" id="EMD-42935"/>
<dbReference type="EMDB" id="EMD-42936"/>
<dbReference type="EMDB" id="EMD-42937"/>
<dbReference type="EMDB" id="EMD-6461"/>
<dbReference type="EMDB" id="EMD-9005"/>
<dbReference type="SMR" id="P53990"/>
<dbReference type="BioGRID" id="115141">
    <property type="interactions" value="121"/>
</dbReference>
<dbReference type="CORUM" id="P53990"/>
<dbReference type="DIP" id="DIP-42546N"/>
<dbReference type="FunCoup" id="P53990">
    <property type="interactions" value="3219"/>
</dbReference>
<dbReference type="IntAct" id="P53990">
    <property type="interactions" value="78"/>
</dbReference>
<dbReference type="MINT" id="P53990"/>
<dbReference type="STRING" id="9606.ENSP00000438399"/>
<dbReference type="GlyGen" id="P53990">
    <property type="glycosylation" value="1 site, 1 O-linked glycan (1 site)"/>
</dbReference>
<dbReference type="iPTMnet" id="P53990"/>
<dbReference type="MetOSite" id="P53990"/>
<dbReference type="PhosphoSitePlus" id="P53990"/>
<dbReference type="SwissPalm" id="P53990"/>
<dbReference type="BioMuta" id="IST1"/>
<dbReference type="DMDM" id="1723119"/>
<dbReference type="jPOST" id="P53990"/>
<dbReference type="MassIVE" id="P53990"/>
<dbReference type="PaxDb" id="9606-ENSP00000438399"/>
<dbReference type="PeptideAtlas" id="P53990"/>
<dbReference type="ProteomicsDB" id="1902"/>
<dbReference type="ProteomicsDB" id="56636">
    <molecule id="P53990-1"/>
</dbReference>
<dbReference type="ProteomicsDB" id="56637">
    <molecule id="P53990-2"/>
</dbReference>
<dbReference type="ProteomicsDB" id="56638">
    <molecule id="P53990-3"/>
</dbReference>
<dbReference type="ProteomicsDB" id="56639">
    <molecule id="P53990-4"/>
</dbReference>
<dbReference type="Pumba" id="P53990"/>
<dbReference type="Antibodypedia" id="44614">
    <property type="antibodies" value="142 antibodies from 26 providers"/>
</dbReference>
<dbReference type="DNASU" id="9798"/>
<dbReference type="Ensembl" id="ENST00000329908.12">
    <molecule id="P53990-3"/>
    <property type="protein sequence ID" value="ENSP00000330408.8"/>
    <property type="gene ID" value="ENSG00000182149.21"/>
</dbReference>
<dbReference type="Ensembl" id="ENST00000378798.9">
    <molecule id="P53990-2"/>
    <property type="protein sequence ID" value="ENSP00000368075.5"/>
    <property type="gene ID" value="ENSG00000182149.21"/>
</dbReference>
<dbReference type="Ensembl" id="ENST00000378799.11">
    <molecule id="P53990-4"/>
    <property type="protein sequence ID" value="ENSP00000368076.6"/>
    <property type="gene ID" value="ENSG00000182149.21"/>
</dbReference>
<dbReference type="Ensembl" id="ENST00000535424.5">
    <molecule id="P53990-5"/>
    <property type="protein sequence ID" value="ENSP00000438399.1"/>
    <property type="gene ID" value="ENSG00000182149.21"/>
</dbReference>
<dbReference type="Ensembl" id="ENST00000538850.5">
    <molecule id="P53990-6"/>
    <property type="protein sequence ID" value="ENSP00000463711.1"/>
    <property type="gene ID" value="ENSG00000182149.21"/>
</dbReference>
<dbReference type="Ensembl" id="ENST00000541571.6">
    <molecule id="P53990-4"/>
    <property type="protein sequence ID" value="ENSP00000455860.1"/>
    <property type="gene ID" value="ENSG00000182149.21"/>
</dbReference>
<dbReference type="Ensembl" id="ENST00000544564.5">
    <molecule id="P53990-4"/>
    <property type="protein sequence ID" value="ENSP00000457844.1"/>
    <property type="gene ID" value="ENSG00000182149.21"/>
</dbReference>
<dbReference type="Ensembl" id="ENST00000606369.5">
    <molecule id="P53990-6"/>
    <property type="protein sequence ID" value="ENSP00000475853.1"/>
    <property type="gene ID" value="ENSG00000182149.21"/>
</dbReference>
<dbReference type="GeneID" id="9798"/>
<dbReference type="KEGG" id="hsa:9798"/>
<dbReference type="MANE-Select" id="ENST00000378799.11">
    <molecule id="P53990-4"/>
    <property type="protein sequence ID" value="ENSP00000368076.6"/>
    <property type="RefSeq nucleotide sequence ID" value="NM_001270975.2"/>
    <property type="RefSeq protein sequence ID" value="NP_001257904.1"/>
</dbReference>
<dbReference type="UCSC" id="uc002fbk.3">
    <molecule id="P53990-1"/>
    <property type="organism name" value="human"/>
</dbReference>
<dbReference type="AGR" id="HGNC:28977"/>
<dbReference type="CTD" id="9798"/>
<dbReference type="DisGeNET" id="9798"/>
<dbReference type="GeneCards" id="IST1"/>
<dbReference type="HGNC" id="HGNC:28977">
    <property type="gene designation" value="IST1"/>
</dbReference>
<dbReference type="HPA" id="ENSG00000182149">
    <property type="expression patterns" value="Low tissue specificity"/>
</dbReference>
<dbReference type="MIM" id="616434">
    <property type="type" value="gene"/>
</dbReference>
<dbReference type="neXtProt" id="NX_P53990"/>
<dbReference type="OpenTargets" id="ENSG00000182149"/>
<dbReference type="PharmGKB" id="PA142671633"/>
<dbReference type="VEuPathDB" id="HostDB:ENSG00000182149"/>
<dbReference type="eggNOG" id="KOG2027">
    <property type="taxonomic scope" value="Eukaryota"/>
</dbReference>
<dbReference type="GeneTree" id="ENSGT00390000007453"/>
<dbReference type="InParanoid" id="P53990"/>
<dbReference type="OrthoDB" id="29853at2759"/>
<dbReference type="PAN-GO" id="P53990">
    <property type="GO annotations" value="1 GO annotation based on evolutionary models"/>
</dbReference>
<dbReference type="PhylomeDB" id="P53990"/>
<dbReference type="TreeFam" id="TF314258"/>
<dbReference type="PathwayCommons" id="P53990"/>
<dbReference type="Reactome" id="R-HSA-6798695">
    <property type="pathway name" value="Neutrophil degranulation"/>
</dbReference>
<dbReference type="Reactome" id="R-HSA-9668328">
    <property type="pathway name" value="Sealing of the nuclear envelope (NE) by ESCRT-III"/>
</dbReference>
<dbReference type="SignaLink" id="P53990"/>
<dbReference type="SIGNOR" id="P53990"/>
<dbReference type="BioGRID-ORCS" id="9798">
    <property type="hits" value="99 hits in 1155 CRISPR screens"/>
</dbReference>
<dbReference type="CD-CODE" id="8C2F96ED">
    <property type="entry name" value="Centrosome"/>
</dbReference>
<dbReference type="CD-CODE" id="FB4E32DD">
    <property type="entry name" value="Presynaptic clusters and postsynaptic densities"/>
</dbReference>
<dbReference type="ChiTaRS" id="IST1">
    <property type="organism name" value="human"/>
</dbReference>
<dbReference type="EvolutionaryTrace" id="P53990"/>
<dbReference type="GenomeRNAi" id="9798"/>
<dbReference type="Pharos" id="P53990">
    <property type="development level" value="Tbio"/>
</dbReference>
<dbReference type="PRO" id="PR:P53990"/>
<dbReference type="Proteomes" id="UP000005640">
    <property type="component" value="Chromosome 16"/>
</dbReference>
<dbReference type="RNAct" id="P53990">
    <property type="molecule type" value="protein"/>
</dbReference>
<dbReference type="Bgee" id="ENSG00000182149">
    <property type="expression patterns" value="Expressed in left ovary and 207 other cell types or tissues"/>
</dbReference>
<dbReference type="ExpressionAtlas" id="P53990">
    <property type="expression patterns" value="baseline and differential"/>
</dbReference>
<dbReference type="GO" id="GO:0035578">
    <property type="term" value="C:azurophil granule lumen"/>
    <property type="evidence" value="ECO:0000304"/>
    <property type="project" value="Reactome"/>
</dbReference>
<dbReference type="GO" id="GO:0005813">
    <property type="term" value="C:centrosome"/>
    <property type="evidence" value="ECO:0000314"/>
    <property type="project" value="UniProtKB"/>
</dbReference>
<dbReference type="GO" id="GO:0000785">
    <property type="term" value="C:chromatin"/>
    <property type="evidence" value="ECO:0000314"/>
    <property type="project" value="ARUK-UCL"/>
</dbReference>
<dbReference type="GO" id="GO:0005829">
    <property type="term" value="C:cytosol"/>
    <property type="evidence" value="ECO:0000314"/>
    <property type="project" value="UniProtKB"/>
</dbReference>
<dbReference type="GO" id="GO:0005793">
    <property type="term" value="C:endoplasmic reticulum-Golgi intermediate compartment"/>
    <property type="evidence" value="ECO:0000314"/>
    <property type="project" value="UniProtKB"/>
</dbReference>
<dbReference type="GO" id="GO:0070062">
    <property type="term" value="C:extracellular exosome"/>
    <property type="evidence" value="ECO:0007005"/>
    <property type="project" value="UniProtKB"/>
</dbReference>
<dbReference type="GO" id="GO:0005576">
    <property type="term" value="C:extracellular region"/>
    <property type="evidence" value="ECO:0000304"/>
    <property type="project" value="Reactome"/>
</dbReference>
<dbReference type="GO" id="GO:0090543">
    <property type="term" value="C:Flemming body"/>
    <property type="evidence" value="ECO:0000314"/>
    <property type="project" value="UniProtKB"/>
</dbReference>
<dbReference type="GO" id="GO:0043231">
    <property type="term" value="C:intracellular membrane-bounded organelle"/>
    <property type="evidence" value="ECO:0000314"/>
    <property type="project" value="HPA"/>
</dbReference>
<dbReference type="GO" id="GO:0030496">
    <property type="term" value="C:midbody"/>
    <property type="evidence" value="ECO:0000314"/>
    <property type="project" value="UniProtKB"/>
</dbReference>
<dbReference type="GO" id="GO:0005635">
    <property type="term" value="C:nuclear envelope"/>
    <property type="evidence" value="ECO:0007669"/>
    <property type="project" value="UniProtKB-SubCell"/>
</dbReference>
<dbReference type="GO" id="GO:0045296">
    <property type="term" value="F:cadherin binding"/>
    <property type="evidence" value="ECO:0007005"/>
    <property type="project" value="BHF-UCL"/>
</dbReference>
<dbReference type="GO" id="GO:0042802">
    <property type="term" value="F:identical protein binding"/>
    <property type="evidence" value="ECO:0000353"/>
    <property type="project" value="IntAct"/>
</dbReference>
<dbReference type="GO" id="GO:0090541">
    <property type="term" value="F:MIT domain binding"/>
    <property type="evidence" value="ECO:0000353"/>
    <property type="project" value="UniProtKB"/>
</dbReference>
<dbReference type="GO" id="GO:0019904">
    <property type="term" value="F:protein domain specific binding"/>
    <property type="evidence" value="ECO:0000353"/>
    <property type="project" value="UniProtKB"/>
</dbReference>
<dbReference type="GO" id="GO:0044877">
    <property type="term" value="F:protein-containing complex binding"/>
    <property type="evidence" value="ECO:0000314"/>
    <property type="project" value="UniProtKB"/>
</dbReference>
<dbReference type="GO" id="GO:0051301">
    <property type="term" value="P:cell division"/>
    <property type="evidence" value="ECO:0000315"/>
    <property type="project" value="UniProtKB"/>
</dbReference>
<dbReference type="GO" id="GO:0048668">
    <property type="term" value="P:collateral sprouting"/>
    <property type="evidence" value="ECO:0007669"/>
    <property type="project" value="Ensembl"/>
</dbReference>
<dbReference type="GO" id="GO:0061640">
    <property type="term" value="P:cytoskeleton-dependent cytokinesis"/>
    <property type="evidence" value="ECO:0000315"/>
    <property type="project" value="UniProtKB"/>
</dbReference>
<dbReference type="GO" id="GO:1904903">
    <property type="term" value="P:ESCRT III complex disassembly"/>
    <property type="evidence" value="ECO:0000303"/>
    <property type="project" value="ParkinsonsUK-UCL"/>
</dbReference>
<dbReference type="GO" id="GO:0045184">
    <property type="term" value="P:establishment of protein localization"/>
    <property type="evidence" value="ECO:0000315"/>
    <property type="project" value="UniProtKB"/>
</dbReference>
<dbReference type="GO" id="GO:0061952">
    <property type="term" value="P:midbody abscission"/>
    <property type="evidence" value="ECO:0000314"/>
    <property type="project" value="UniProtKB"/>
</dbReference>
<dbReference type="GO" id="GO:0036258">
    <property type="term" value="P:multivesicular body assembly"/>
    <property type="evidence" value="ECO:0000303"/>
    <property type="project" value="ParkinsonsUK-UCL"/>
</dbReference>
<dbReference type="GO" id="GO:0048672">
    <property type="term" value="P:positive regulation of collateral sprouting"/>
    <property type="evidence" value="ECO:0007669"/>
    <property type="project" value="Ensembl"/>
</dbReference>
<dbReference type="GO" id="GO:0045862">
    <property type="term" value="P:positive regulation of proteolysis"/>
    <property type="evidence" value="ECO:0000314"/>
    <property type="project" value="UniProtKB"/>
</dbReference>
<dbReference type="GO" id="GO:0008104">
    <property type="term" value="P:protein localization"/>
    <property type="evidence" value="ECO:0000315"/>
    <property type="project" value="UniProtKB"/>
</dbReference>
<dbReference type="GO" id="GO:0015031">
    <property type="term" value="P:protein transport"/>
    <property type="evidence" value="ECO:0007669"/>
    <property type="project" value="InterPro"/>
</dbReference>
<dbReference type="FunFam" id="1.20.1260.60:FF:000001">
    <property type="entry name" value="IST1 homolog isoform X1"/>
    <property type="match status" value="1"/>
</dbReference>
<dbReference type="Gene3D" id="1.20.1260.60">
    <property type="entry name" value="Vacuolar protein sorting-associated protein Ist1"/>
    <property type="match status" value="1"/>
</dbReference>
<dbReference type="InterPro" id="IPR005061">
    <property type="entry name" value="Ist1"/>
</dbReference>
<dbReference type="InterPro" id="IPR042277">
    <property type="entry name" value="IST1-like"/>
</dbReference>
<dbReference type="PANTHER" id="PTHR12161">
    <property type="entry name" value="IST1 FAMILY MEMBER"/>
    <property type="match status" value="1"/>
</dbReference>
<dbReference type="PANTHER" id="PTHR12161:SF5">
    <property type="entry name" value="IST1 HOMOLOG"/>
    <property type="match status" value="1"/>
</dbReference>
<dbReference type="Pfam" id="PF03398">
    <property type="entry name" value="Ist1"/>
    <property type="match status" value="1"/>
</dbReference>
<evidence type="ECO:0000256" key="1">
    <source>
        <dbReference type="SAM" id="MobiDB-lite"/>
    </source>
</evidence>
<evidence type="ECO:0000269" key="2">
    <source>
    </source>
</evidence>
<evidence type="ECO:0000269" key="3">
    <source>
    </source>
</evidence>
<evidence type="ECO:0000269" key="4">
    <source>
    </source>
</evidence>
<evidence type="ECO:0000269" key="5">
    <source>
    </source>
</evidence>
<evidence type="ECO:0000269" key="6">
    <source>
    </source>
</evidence>
<evidence type="ECO:0000269" key="7">
    <source>
    </source>
</evidence>
<evidence type="ECO:0000269" key="8">
    <source>
    </source>
</evidence>
<evidence type="ECO:0000303" key="9">
    <source>
    </source>
</evidence>
<evidence type="ECO:0000303" key="10">
    <source>
    </source>
</evidence>
<evidence type="ECO:0000303" key="11">
    <source>
    </source>
</evidence>
<evidence type="ECO:0000305" key="12"/>
<evidence type="ECO:0007744" key="13">
    <source>
    </source>
</evidence>
<evidence type="ECO:0007744" key="14">
    <source>
    </source>
</evidence>
<evidence type="ECO:0007829" key="15">
    <source>
        <dbReference type="PDB" id="3FRR"/>
    </source>
</evidence>
<evidence type="ECO:0007829" key="16">
    <source>
        <dbReference type="PDB" id="7S7J"/>
    </source>
</evidence>
<keyword id="KW-0002">3D-structure</keyword>
<keyword id="KW-0025">Alternative splicing</keyword>
<keyword id="KW-0131">Cell cycle</keyword>
<keyword id="KW-0132">Cell division</keyword>
<keyword id="KW-0963">Cytoplasm</keyword>
<keyword id="KW-0968">Cytoplasmic vesicle</keyword>
<keyword id="KW-0206">Cytoskeleton</keyword>
<keyword id="KW-0539">Nucleus</keyword>
<keyword id="KW-0597">Phosphoprotein</keyword>
<keyword id="KW-1267">Proteomics identification</keyword>
<keyword id="KW-1185">Reference proteome</keyword>
<feature type="chain" id="PRO_0000050727" description="IST1 homolog">
    <location>
        <begin position="1"/>
        <end position="364"/>
    </location>
</feature>
<feature type="region of interest" description="Interaction with CHMP1A and CHMP1B">
    <location>
        <begin position="1"/>
        <end position="168"/>
    </location>
</feature>
<feature type="region of interest" description="Interaction with VPS37B" evidence="2">
    <location>
        <begin position="64"/>
        <end position="279"/>
    </location>
</feature>
<feature type="region of interest" description="Interaction with VTA1">
    <location>
        <begin position="190"/>
        <end position="364"/>
    </location>
</feature>
<feature type="region of interest" description="Disordered" evidence="1">
    <location>
        <begin position="294"/>
        <end position="352"/>
    </location>
</feature>
<feature type="region of interest" description="Interaction with VPS4A, VTA1, MITD1 STAMBP and USP8" evidence="3">
    <location>
        <begin position="348"/>
        <end position="364"/>
    </location>
</feature>
<feature type="short sequence motif" description="Type-2 MIT-interacting motif">
    <location>
        <begin position="321"/>
        <end position="332"/>
    </location>
</feature>
<feature type="short sequence motif" description="MIT-interacting motif">
    <location>
        <begin position="351"/>
        <end position="361"/>
    </location>
</feature>
<feature type="compositionally biased region" description="Low complexity" evidence="1">
    <location>
        <begin position="335"/>
        <end position="345"/>
    </location>
</feature>
<feature type="modified residue" description="Phosphoserine" evidence="14">
    <location>
        <position position="4"/>
    </location>
</feature>
<feature type="modified residue" description="Phosphotyrosine" evidence="13">
    <location>
        <position position="43"/>
    </location>
</feature>
<feature type="splice variant" id="VSP_055118" description="In isoform 6." evidence="12">
    <location>
        <begin position="1"/>
        <end position="148"/>
    </location>
</feature>
<feature type="splice variant" id="VSP_047075" description="In isoform 5." evidence="9">
    <original>M</original>
    <variation>MVFKLKTKEEQHSM</variation>
    <location>
        <position position="1"/>
    </location>
</feature>
<feature type="splice variant" id="VSP_017118" description="In isoform 2, isoform 3, isoform 4 and isoform 6." evidence="9 10">
    <original>V</original>
    <variation>VPM</variation>
    <location>
        <position position="228"/>
    </location>
</feature>
<feature type="splice variant" id="VSP_047076" description="In isoform 5." evidence="9">
    <original>P</original>
    <variation>PMP</variation>
    <location>
        <position position="237"/>
    </location>
</feature>
<feature type="splice variant" id="VSP_017119" description="In isoform 2." evidence="10">
    <location>
        <begin position="252"/>
        <end position="282"/>
    </location>
</feature>
<feature type="splice variant" id="VSP_017120" description="In isoform 3." evidence="10">
    <original>VDDINADKNISSAQIVGPGPKPEASAKLPSRPADNYDNFVLPELPSVPDTLPTASAGASTSASEDIDFDDLSRRFEELKKKT</original>
    <variation>MTLMLIRISLLHRLLVLDPSQKPLQSFLPDLQITMTTLSYQSCHLCQTHYQLHLLVPAPQHLKTLTLMIFPGGLKS</variation>
    <location>
        <begin position="283"/>
        <end position="364"/>
    </location>
</feature>
<feature type="mutagenesis site" description="Diminishes interaction with VPS4A. Greatly diminishes interaction with VPS4A; when associated with A-353." evidence="2">
    <original>L</original>
    <variation>D</variation>
    <location>
        <position position="323"/>
    </location>
</feature>
<feature type="mutagenesis site" description="Diminishes interaction with VPS4A. Greatly diminishes interaction with VPS4A and abolishes interaction with VTA1; when associated with A-353. Greatly diminishes interaction with VPS4A; when associated with A-360." evidence="2">
    <original>L</original>
    <variation>D</variation>
    <location>
        <position position="326"/>
    </location>
</feature>
<feature type="mutagenesis site" description="Diminishes interaction with VPS4A. Greatly diminishes interaction with VPS4A and abolishes interaction with VTA1; when associated with D-326. Greatly diminishes interaction with VPS4A; when associated with D-323." evidence="2">
    <original>L</original>
    <variation>A</variation>
    <location>
        <position position="353"/>
    </location>
</feature>
<feature type="mutagenesis site" description="Abolishes interaction with VTA1, MITD1 and USP8; diminishes interaction with VPS4A." evidence="3">
    <original>LK</original>
    <variation>AA</variation>
    <location>
        <begin position="360"/>
        <end position="361"/>
    </location>
</feature>
<feature type="mutagenesis site" description="Diminishes interaction with VPS4A. Greatly diminishes interaction with VPS4A; when associated with D-326." evidence="2">
    <original>L</original>
    <variation>A</variation>
    <location>
        <position position="360"/>
    </location>
</feature>
<feature type="helix" evidence="15">
    <location>
        <begin position="8"/>
        <end position="45"/>
    </location>
</feature>
<feature type="helix" evidence="15">
    <location>
        <begin position="49"/>
        <end position="81"/>
    </location>
</feature>
<feature type="helix" evidence="15">
    <location>
        <begin position="83"/>
        <end position="87"/>
    </location>
</feature>
<feature type="helix" evidence="15">
    <location>
        <begin position="94"/>
        <end position="96"/>
    </location>
</feature>
<feature type="helix" evidence="15">
    <location>
        <begin position="97"/>
        <end position="110"/>
    </location>
</feature>
<feature type="turn" evidence="15">
    <location>
        <begin position="111"/>
        <end position="113"/>
    </location>
</feature>
<feature type="helix" evidence="15">
    <location>
        <begin position="115"/>
        <end position="128"/>
    </location>
</feature>
<feature type="helix" evidence="15">
    <location>
        <begin position="130"/>
        <end position="137"/>
    </location>
</feature>
<feature type="turn" evidence="15">
    <location>
        <begin position="138"/>
        <end position="141"/>
    </location>
</feature>
<feature type="helix" evidence="15">
    <location>
        <begin position="146"/>
        <end position="151"/>
    </location>
</feature>
<feature type="helix" evidence="15">
    <location>
        <begin position="159"/>
        <end position="173"/>
    </location>
</feature>
<feature type="helix" evidence="15">
    <location>
        <begin position="181"/>
        <end position="185"/>
    </location>
</feature>
<feature type="helix" evidence="16">
    <location>
        <begin position="350"/>
        <end position="362"/>
    </location>
</feature>
<organism>
    <name type="scientific">Homo sapiens</name>
    <name type="common">Human</name>
    <dbReference type="NCBI Taxonomy" id="9606"/>
    <lineage>
        <taxon>Eukaryota</taxon>
        <taxon>Metazoa</taxon>
        <taxon>Chordata</taxon>
        <taxon>Craniata</taxon>
        <taxon>Vertebrata</taxon>
        <taxon>Euteleostomi</taxon>
        <taxon>Mammalia</taxon>
        <taxon>Eutheria</taxon>
        <taxon>Euarchontoglires</taxon>
        <taxon>Primates</taxon>
        <taxon>Haplorrhini</taxon>
        <taxon>Catarrhini</taxon>
        <taxon>Hominidae</taxon>
        <taxon>Homo</taxon>
    </lineage>
</organism>
<reference key="1">
    <citation type="journal article" date="1996" name="DNA Res.">
        <title>Prediction of the coding sequences of unidentified human genes. V. The coding sequences of 40 new genes (KIAA0161-KIAA0200) deduced by analysis of cDNA clones from human cell line KG-1.</title>
        <authorList>
            <person name="Nagase T."/>
            <person name="Seki N."/>
            <person name="Ishikawa K."/>
            <person name="Tanaka A."/>
            <person name="Nomura N."/>
        </authorList>
    </citation>
    <scope>NUCLEOTIDE SEQUENCE [LARGE SCALE MRNA] (ISOFORM 1)</scope>
    <source>
        <tissue>Bone marrow</tissue>
    </source>
</reference>
<reference key="2">
    <citation type="journal article" date="2003" name="Oncogene">
        <title>Large-scale identification and characterization of human genes that activate NF-kappaB and MAPK signaling pathways.</title>
        <authorList>
            <person name="Matsuda A."/>
            <person name="Suzuki Y."/>
            <person name="Honda G."/>
            <person name="Muramatsu S."/>
            <person name="Matsuzaki O."/>
            <person name="Nagano Y."/>
            <person name="Doi T."/>
            <person name="Shimotohno K."/>
            <person name="Harada T."/>
            <person name="Nishida E."/>
            <person name="Hayashi H."/>
            <person name="Sugano S."/>
        </authorList>
    </citation>
    <scope>NUCLEOTIDE SEQUENCE [LARGE SCALE MRNA] (ISOFORM 1)</scope>
    <source>
        <tissue>Lung fibroblast</tissue>
    </source>
</reference>
<reference key="3">
    <citation type="journal article" date="2004" name="Nat. Genet.">
        <title>Complete sequencing and characterization of 21,243 full-length human cDNAs.</title>
        <authorList>
            <person name="Ota T."/>
            <person name="Suzuki Y."/>
            <person name="Nishikawa T."/>
            <person name="Otsuki T."/>
            <person name="Sugiyama T."/>
            <person name="Irie R."/>
            <person name="Wakamatsu A."/>
            <person name="Hayashi K."/>
            <person name="Sato H."/>
            <person name="Nagai K."/>
            <person name="Kimura K."/>
            <person name="Makita H."/>
            <person name="Sekine M."/>
            <person name="Obayashi M."/>
            <person name="Nishi T."/>
            <person name="Shibahara T."/>
            <person name="Tanaka T."/>
            <person name="Ishii S."/>
            <person name="Yamamoto J."/>
            <person name="Saito K."/>
            <person name="Kawai Y."/>
            <person name="Isono Y."/>
            <person name="Nakamura Y."/>
            <person name="Nagahari K."/>
            <person name="Murakami K."/>
            <person name="Yasuda T."/>
            <person name="Iwayanagi T."/>
            <person name="Wagatsuma M."/>
            <person name="Shiratori A."/>
            <person name="Sudo H."/>
            <person name="Hosoiri T."/>
            <person name="Kaku Y."/>
            <person name="Kodaira H."/>
            <person name="Kondo H."/>
            <person name="Sugawara M."/>
            <person name="Takahashi M."/>
            <person name="Kanda K."/>
            <person name="Yokoi T."/>
            <person name="Furuya T."/>
            <person name="Kikkawa E."/>
            <person name="Omura Y."/>
            <person name="Abe K."/>
            <person name="Kamihara K."/>
            <person name="Katsuta N."/>
            <person name="Sato K."/>
            <person name="Tanikawa M."/>
            <person name="Yamazaki M."/>
            <person name="Ninomiya K."/>
            <person name="Ishibashi T."/>
            <person name="Yamashita H."/>
            <person name="Murakawa K."/>
            <person name="Fujimori K."/>
            <person name="Tanai H."/>
            <person name="Kimata M."/>
            <person name="Watanabe M."/>
            <person name="Hiraoka S."/>
            <person name="Chiba Y."/>
            <person name="Ishida S."/>
            <person name="Ono Y."/>
            <person name="Takiguchi S."/>
            <person name="Watanabe S."/>
            <person name="Yosida M."/>
            <person name="Hotuta T."/>
            <person name="Kusano J."/>
            <person name="Kanehori K."/>
            <person name="Takahashi-Fujii A."/>
            <person name="Hara H."/>
            <person name="Tanase T.-O."/>
            <person name="Nomura Y."/>
            <person name="Togiya S."/>
            <person name="Komai F."/>
            <person name="Hara R."/>
            <person name="Takeuchi K."/>
            <person name="Arita M."/>
            <person name="Imose N."/>
            <person name="Musashino K."/>
            <person name="Yuuki H."/>
            <person name="Oshima A."/>
            <person name="Sasaki N."/>
            <person name="Aotsuka S."/>
            <person name="Yoshikawa Y."/>
            <person name="Matsunawa H."/>
            <person name="Ichihara T."/>
            <person name="Shiohata N."/>
            <person name="Sano S."/>
            <person name="Moriya S."/>
            <person name="Momiyama H."/>
            <person name="Satoh N."/>
            <person name="Takami S."/>
            <person name="Terashima Y."/>
            <person name="Suzuki O."/>
            <person name="Nakagawa S."/>
            <person name="Senoh A."/>
            <person name="Mizoguchi H."/>
            <person name="Goto Y."/>
            <person name="Shimizu F."/>
            <person name="Wakebe H."/>
            <person name="Hishigaki H."/>
            <person name="Watanabe T."/>
            <person name="Sugiyama A."/>
            <person name="Takemoto M."/>
            <person name="Kawakami B."/>
            <person name="Yamazaki M."/>
            <person name="Watanabe K."/>
            <person name="Kumagai A."/>
            <person name="Itakura S."/>
            <person name="Fukuzumi Y."/>
            <person name="Fujimori Y."/>
            <person name="Komiyama M."/>
            <person name="Tashiro H."/>
            <person name="Tanigami A."/>
            <person name="Fujiwara T."/>
            <person name="Ono T."/>
            <person name="Yamada K."/>
            <person name="Fujii Y."/>
            <person name="Ozaki K."/>
            <person name="Hirao M."/>
            <person name="Ohmori Y."/>
            <person name="Kawabata A."/>
            <person name="Hikiji T."/>
            <person name="Kobatake N."/>
            <person name="Inagaki H."/>
            <person name="Ikema Y."/>
            <person name="Okamoto S."/>
            <person name="Okitani R."/>
            <person name="Kawakami T."/>
            <person name="Noguchi S."/>
            <person name="Itoh T."/>
            <person name="Shigeta K."/>
            <person name="Senba T."/>
            <person name="Matsumura K."/>
            <person name="Nakajima Y."/>
            <person name="Mizuno T."/>
            <person name="Morinaga M."/>
            <person name="Sasaki M."/>
            <person name="Togashi T."/>
            <person name="Oyama M."/>
            <person name="Hata H."/>
            <person name="Watanabe M."/>
            <person name="Komatsu T."/>
            <person name="Mizushima-Sugano J."/>
            <person name="Satoh T."/>
            <person name="Shirai Y."/>
            <person name="Takahashi Y."/>
            <person name="Nakagawa K."/>
            <person name="Okumura K."/>
            <person name="Nagase T."/>
            <person name="Nomura N."/>
            <person name="Kikuchi H."/>
            <person name="Masuho Y."/>
            <person name="Yamashita R."/>
            <person name="Nakai K."/>
            <person name="Yada T."/>
            <person name="Nakamura Y."/>
            <person name="Ohara O."/>
            <person name="Isogai T."/>
            <person name="Sugano S."/>
        </authorList>
    </citation>
    <scope>NUCLEOTIDE SEQUENCE [LARGE SCALE MRNA] (ISOFORMS 4 AND 5)</scope>
    <source>
        <tissue>Testis</tissue>
        <tissue>Uterus</tissue>
    </source>
</reference>
<reference key="4">
    <citation type="journal article" date="2004" name="Nature">
        <title>The sequence and analysis of duplication-rich human chromosome 16.</title>
        <authorList>
            <person name="Martin J."/>
            <person name="Han C."/>
            <person name="Gordon L.A."/>
            <person name="Terry A."/>
            <person name="Prabhakar S."/>
            <person name="She X."/>
            <person name="Xie G."/>
            <person name="Hellsten U."/>
            <person name="Chan Y.M."/>
            <person name="Altherr M."/>
            <person name="Couronne O."/>
            <person name="Aerts A."/>
            <person name="Bajorek E."/>
            <person name="Black S."/>
            <person name="Blumer H."/>
            <person name="Branscomb E."/>
            <person name="Brown N.C."/>
            <person name="Bruno W.J."/>
            <person name="Buckingham J.M."/>
            <person name="Callen D.F."/>
            <person name="Campbell C.S."/>
            <person name="Campbell M.L."/>
            <person name="Campbell E.W."/>
            <person name="Caoile C."/>
            <person name="Challacombe J.F."/>
            <person name="Chasteen L.A."/>
            <person name="Chertkov O."/>
            <person name="Chi H.C."/>
            <person name="Christensen M."/>
            <person name="Clark L.M."/>
            <person name="Cohn J.D."/>
            <person name="Denys M."/>
            <person name="Detter J.C."/>
            <person name="Dickson M."/>
            <person name="Dimitrijevic-Bussod M."/>
            <person name="Escobar J."/>
            <person name="Fawcett J.J."/>
            <person name="Flowers D."/>
            <person name="Fotopulos D."/>
            <person name="Glavina T."/>
            <person name="Gomez M."/>
            <person name="Gonzales E."/>
            <person name="Goodstein D."/>
            <person name="Goodwin L.A."/>
            <person name="Grady D.L."/>
            <person name="Grigoriev I."/>
            <person name="Groza M."/>
            <person name="Hammon N."/>
            <person name="Hawkins T."/>
            <person name="Haydu L."/>
            <person name="Hildebrand C.E."/>
            <person name="Huang W."/>
            <person name="Israni S."/>
            <person name="Jett J."/>
            <person name="Jewett P.B."/>
            <person name="Kadner K."/>
            <person name="Kimball H."/>
            <person name="Kobayashi A."/>
            <person name="Krawczyk M.-C."/>
            <person name="Leyba T."/>
            <person name="Longmire J.L."/>
            <person name="Lopez F."/>
            <person name="Lou Y."/>
            <person name="Lowry S."/>
            <person name="Ludeman T."/>
            <person name="Manohar C.F."/>
            <person name="Mark G.A."/>
            <person name="McMurray K.L."/>
            <person name="Meincke L.J."/>
            <person name="Morgan J."/>
            <person name="Moyzis R.K."/>
            <person name="Mundt M.O."/>
            <person name="Munk A.C."/>
            <person name="Nandkeshwar R.D."/>
            <person name="Pitluck S."/>
            <person name="Pollard M."/>
            <person name="Predki P."/>
            <person name="Parson-Quintana B."/>
            <person name="Ramirez L."/>
            <person name="Rash S."/>
            <person name="Retterer J."/>
            <person name="Ricke D.O."/>
            <person name="Robinson D.L."/>
            <person name="Rodriguez A."/>
            <person name="Salamov A."/>
            <person name="Saunders E.H."/>
            <person name="Scott D."/>
            <person name="Shough T."/>
            <person name="Stallings R.L."/>
            <person name="Stalvey M."/>
            <person name="Sutherland R.D."/>
            <person name="Tapia R."/>
            <person name="Tesmer J.G."/>
            <person name="Thayer N."/>
            <person name="Thompson L.S."/>
            <person name="Tice H."/>
            <person name="Torney D.C."/>
            <person name="Tran-Gyamfi M."/>
            <person name="Tsai M."/>
            <person name="Ulanovsky L.E."/>
            <person name="Ustaszewska A."/>
            <person name="Vo N."/>
            <person name="White P.S."/>
            <person name="Williams A.L."/>
            <person name="Wills P.L."/>
            <person name="Wu J.-R."/>
            <person name="Wu K."/>
            <person name="Yang J."/>
            <person name="DeJong P."/>
            <person name="Bruce D."/>
            <person name="Doggett N.A."/>
            <person name="Deaven L."/>
            <person name="Schmutz J."/>
            <person name="Grimwood J."/>
            <person name="Richardson P."/>
            <person name="Rokhsar D.S."/>
            <person name="Eichler E.E."/>
            <person name="Gilna P."/>
            <person name="Lucas S.M."/>
            <person name="Myers R.M."/>
            <person name="Rubin E.M."/>
            <person name="Pennacchio L.A."/>
        </authorList>
    </citation>
    <scope>NUCLEOTIDE SEQUENCE [LARGE SCALE GENOMIC DNA]</scope>
</reference>
<reference key="5">
    <citation type="journal article" date="2004" name="Genome Res.">
        <title>The status, quality, and expansion of the NIH full-length cDNA project: the Mammalian Gene Collection (MGC).</title>
        <authorList>
            <consortium name="The MGC Project Team"/>
        </authorList>
    </citation>
    <scope>NUCLEOTIDE SEQUENCE [LARGE SCALE MRNA] (ISOFORMS 2; 3 AND 4)</scope>
    <source>
        <tissue>Eye</tissue>
        <tissue>Lung</tissue>
    </source>
</reference>
<reference key="6">
    <citation type="journal article" date="2005" name="Nat. Biotechnol.">
        <title>Immunoaffinity profiling of tyrosine phosphorylation in cancer cells.</title>
        <authorList>
            <person name="Rush J."/>
            <person name="Moritz A."/>
            <person name="Lee K.A."/>
            <person name="Guo A."/>
            <person name="Goss V.L."/>
            <person name="Spek E.J."/>
            <person name="Zhang H."/>
            <person name="Zha X.-M."/>
            <person name="Polakiewicz R.D."/>
            <person name="Comb M.J."/>
        </authorList>
    </citation>
    <scope>PHOSPHORYLATION [LARGE SCALE ANALYSIS] AT TYR-43</scope>
    <scope>IDENTIFICATION BY MASS SPECTROMETRY [LARGE SCALE ANALYSIS]</scope>
</reference>
<reference key="7">
    <citation type="journal article" date="2009" name="Mol. Biol. Cell">
        <title>Essential role of hIST1 in cytokinesis.</title>
        <authorList>
            <person name="Agromayor M."/>
            <person name="Carlton J.G."/>
            <person name="Phelan J.P."/>
            <person name="Matthews D.R."/>
            <person name="Carlin L.M."/>
            <person name="Ameer-Beg S."/>
            <person name="Bowers K."/>
            <person name="Martin-Serrano J."/>
        </authorList>
    </citation>
    <scope>FUNCTION IN CYTOKINESIS</scope>
    <scope>SUBCELLULAR LOCATION</scope>
    <scope>INTERACTION WITH CHMP1A; CHMP1B; VPS4A; VTA1; MITD1; STAMBP; SPAST AND USP8</scope>
    <scope>MUTAGENESIS OF 360-LEU-LYS-361</scope>
</reference>
<reference key="8">
    <citation type="journal article" date="2009" name="Mol. Biol. Cell">
        <title>Biochemical analyses of human IST1 and its function in cytokinesis.</title>
        <authorList>
            <person name="Bajorek M."/>
            <person name="Morita E."/>
            <person name="Skalicky J.J."/>
            <person name="Morham S.G."/>
            <person name="Babst M."/>
            <person name="Sundquist W.I."/>
        </authorList>
    </citation>
    <scope>FUNCTION IN CYTOKINESIS</scope>
    <scope>SUBCELLULAR LOCATION</scope>
    <scope>INTERACTION WITH VPS37B; VTA1; CHMP1A; CHMP1B; VPS4A AND VPS4B</scope>
    <scope>INTERACTION WITH THE ESCRT-1 COMPLEX</scope>
    <scope>MUTAGENESIS OF LEU-323; LEU-326; LEU-353 AND LEU-360</scope>
</reference>
<reference key="9">
    <citation type="journal article" date="2010" name="Mol. Biol. Cell">
        <title>SPG20 protein spartin is recruited to midbodies by ESCRT-III protein Ist1 and participates in cytokinesis.</title>
        <authorList>
            <person name="Renvoise B."/>
            <person name="Parker R.L."/>
            <person name="Yang D."/>
            <person name="Bakowska J.C."/>
            <person name="Hurley J.H."/>
            <person name="Blackstone C."/>
        </authorList>
    </citation>
    <scope>INTERACTION WITH SPART</scope>
    <scope>SUBCELLULAR LOCATION</scope>
</reference>
<reference key="10">
    <citation type="journal article" date="2010" name="Sci. Signal.">
        <title>Quantitative phosphoproteomics reveals widespread full phosphorylation site occupancy during mitosis.</title>
        <authorList>
            <person name="Olsen J.V."/>
            <person name="Vermeulen M."/>
            <person name="Santamaria A."/>
            <person name="Kumar C."/>
            <person name="Miller M.L."/>
            <person name="Jensen L.J."/>
            <person name="Gnad F."/>
            <person name="Cox J."/>
            <person name="Jensen T.S."/>
            <person name="Nigg E.A."/>
            <person name="Brunak S."/>
            <person name="Mann M."/>
        </authorList>
    </citation>
    <scope>IDENTIFICATION BY MASS SPECTROMETRY [LARGE SCALE ANALYSIS]</scope>
    <source>
        <tissue>Cervix carcinoma</tissue>
    </source>
</reference>
<reference key="11">
    <citation type="journal article" date="2011" name="BMC Syst. Biol.">
        <title>Initial characterization of the human central proteome.</title>
        <authorList>
            <person name="Burkard T.R."/>
            <person name="Planyavsky M."/>
            <person name="Kaupe I."/>
            <person name="Breitwieser F.P."/>
            <person name="Buerckstuemmer T."/>
            <person name="Bennett K.L."/>
            <person name="Superti-Furga G."/>
            <person name="Colinge J."/>
        </authorList>
    </citation>
    <scope>IDENTIFICATION BY MASS SPECTROMETRY [LARGE SCALE ANALYSIS]</scope>
</reference>
<reference key="12">
    <citation type="journal article" date="2012" name="Mol. Biol. Cell">
        <title>MITD1 is recruited to midbodies by ESCRT-III and participates in cytokinesis.</title>
        <authorList>
            <person name="Lee S."/>
            <person name="Chang J."/>
            <person name="Renvoise B."/>
            <person name="Tipirneni A."/>
            <person name="Yang S."/>
            <person name="Blackstone C."/>
        </authorList>
    </citation>
    <scope>INTERACTION WITH MITD1</scope>
</reference>
<reference key="13">
    <citation type="journal article" date="2012" name="Proc. Natl. Acad. Sci. U.S.A.">
        <title>N-terminal acetylome analyses and functional insights of the N-terminal acetyltransferase NatB.</title>
        <authorList>
            <person name="Van Damme P."/>
            <person name="Lasa M."/>
            <person name="Polevoda B."/>
            <person name="Gazquez C."/>
            <person name="Elosegui-Artola A."/>
            <person name="Kim D.S."/>
            <person name="De Juan-Pardo E."/>
            <person name="Demeyer K."/>
            <person name="Hole K."/>
            <person name="Larrea E."/>
            <person name="Timmerman E."/>
            <person name="Prieto J."/>
            <person name="Arnesen T."/>
            <person name="Sherman F."/>
            <person name="Gevaert K."/>
            <person name="Aldabe R."/>
        </authorList>
    </citation>
    <scope>IDENTIFICATION BY MASS SPECTROMETRY [LARGE SCALE ANALYSIS]</scope>
</reference>
<reference key="14">
    <citation type="journal article" date="2013" name="J. Cell Biol.">
        <title>An ESCRT-spastin interaction promotes fission of recycling tubules from the endosome.</title>
        <authorList>
            <person name="Allison R."/>
            <person name="Lumb J.H."/>
            <person name="Fassier C."/>
            <person name="Connell J.W."/>
            <person name="Ten Martin D."/>
            <person name="Seaman M.N."/>
            <person name="Hazan J."/>
            <person name="Reid E."/>
        </authorList>
    </citation>
    <scope>FUNCTION</scope>
    <scope>INTERACTION WITH SPAST</scope>
</reference>
<reference key="15">
    <citation type="journal article" date="2013" name="J. Proteome Res.">
        <title>Toward a comprehensive characterization of a human cancer cell phosphoproteome.</title>
        <authorList>
            <person name="Zhou H."/>
            <person name="Di Palma S."/>
            <person name="Preisinger C."/>
            <person name="Peng M."/>
            <person name="Polat A.N."/>
            <person name="Heck A.J."/>
            <person name="Mohammed S."/>
        </authorList>
    </citation>
    <scope>PHOSPHORYLATION [LARGE SCALE ANALYSIS] AT SER-4</scope>
    <scope>IDENTIFICATION BY MASS SPECTROMETRY [LARGE SCALE ANALYSIS]</scope>
    <source>
        <tissue>Erythroleukemia</tissue>
    </source>
</reference>
<reference key="16">
    <citation type="journal article" date="2014" name="J. Proteomics">
        <title>An enzyme assisted RP-RPLC approach for in-depth analysis of human liver phosphoproteome.</title>
        <authorList>
            <person name="Bian Y."/>
            <person name="Song C."/>
            <person name="Cheng K."/>
            <person name="Dong M."/>
            <person name="Wang F."/>
            <person name="Huang J."/>
            <person name="Sun D."/>
            <person name="Wang L."/>
            <person name="Ye M."/>
            <person name="Zou H."/>
        </authorList>
    </citation>
    <scope>IDENTIFICATION BY MASS SPECTROMETRY [LARGE SCALE ANALYSIS]</scope>
    <source>
        <tissue>Liver</tissue>
    </source>
</reference>
<reference key="17">
    <citation type="journal article" date="2015" name="Nature">
        <title>Spastin and ESCRT-III coordinate mitotic spindle disassembly and nuclear envelope sealing.</title>
        <authorList>
            <person name="Vietri M."/>
            <person name="Schink K.O."/>
            <person name="Campsteijn C."/>
            <person name="Wegner C.S."/>
            <person name="Schultz S.W."/>
            <person name="Christ L."/>
            <person name="Thoresen S.B."/>
            <person name="Brech A."/>
            <person name="Raiborg C."/>
            <person name="Stenmark H."/>
        </authorList>
    </citation>
    <scope>FUNCTION</scope>
    <scope>SUBCELLULAR LOCATION</scope>
    <scope>INTERACTION WITH SPAST</scope>
</reference>
<reference key="18">
    <citation type="journal article" date="2017" name="Proc. Natl. Acad. Sci. U.S.A.">
        <title>LEM2 recruits CHMP7 for ESCRT-mediated nuclear envelope closure in fission yeast and human cells.</title>
        <authorList>
            <person name="Gu M."/>
            <person name="LaJoie D."/>
            <person name="Chen O.S."/>
            <person name="von Appen A."/>
            <person name="Ladinsky M.S."/>
            <person name="Redd M.J."/>
            <person name="Nikolova L."/>
            <person name="Bjorkman P.J."/>
            <person name="Sundquist W.I."/>
            <person name="Ullman K.S."/>
            <person name="Frost A."/>
        </authorList>
    </citation>
    <scope>FUNCTION</scope>
    <scope>SUBCELLULAR LOCATION</scope>
</reference>
<sequence>MLGSGFKAERLRVNLRLVINRLKLLEKKKTELAQKARKEIADYLAAGKDERARIRVEHIIREDYLVEAMEILELYCDLLLARFGLIQSMKELDSGLAESVSTLIWAAPRLQSEVAELKIVADQLCAKYSKEYGKLCRTNQIGTVNDRLMHKLSVEAPPKILVERYLIEIAKNYNVPYEPDSVVMAEAPPGVETDLIDVGFTDDVKKGGPGRGGSGGFTAPVGGPDGTVPMPMPMPMPSANTPFSYPLPKGPSDFNGLPMGTYQAFPNIHPPQIPATPPSYESVDDINADKNISSAQIVGPGPKPEASAKLPSRPADNYDNFVLPELPSVPDTLPTASAGASTSASEDIDFDDLSRRFEELKKKT</sequence>
<protein>
    <recommendedName>
        <fullName>IST1 homolog</fullName>
        <shortName>hIST1</shortName>
    </recommendedName>
    <alternativeName>
        <fullName evidence="11">Charged multivesicular body protein 8</fullName>
        <shortName evidence="11">CHMP8</shortName>
    </alternativeName>
    <alternativeName>
        <fullName>Putative MAPK-activating protein PM28</fullName>
    </alternativeName>
</protein>
<gene>
    <name type="primary">IST1</name>
    <name type="synonym">KIAA0174</name>
</gene>
<comment type="function">
    <text evidence="2 3 6 7 8">ESCRT-III-like protein involved in cytokinesis, nuclear envelope reassembly and endosomal tubulation (PubMed:19129479, PubMed:26040712, PubMed:28242692). Is required for efficient abscission during cytokinesis (PubMed:19129479). Involved in recruiting VPS4A and/or VPS4B to the midbody of dividing cells (PubMed:19129479, PubMed:19129480). During late anaphase, involved in nuclear envelope reassembly and mitotic spindle disassembly together with the ESCRT-III complex: IST1 acts by mediating the recruitment of SPAST to the nuclear membrane, leading to microtubule severing (PubMed:26040712). Recruited to the reforming nuclear envelope (NE) during anaphase by LEMD2 (PubMed:28242692). Regulates early endosomal tubulation together with the ESCRT-III complex by mediating the recruitment of SPAST (PubMed:23897888).</text>
</comment>
<comment type="subunit">
    <text evidence="2 3 4 5 6 7">Interacts with CHMP1A, CHMP1B, VPS4A and VTA1. Interacts with SPAST, STAMBP, and USP8. May interact with VPS37B. May associate with the ESCRT-I complex. Interacts with MITD1, in competition with VSP4 (PubMed:23015756). Interacts with SPART (via MIT domain); leading to the recruitment of SPART to midbodies (PubMed:20719964). Interacts with SPAST (PubMed:23897888, PubMed:26040712).</text>
</comment>
<comment type="interaction">
    <interactant intactId="EBI-945994">
        <id>P53990</id>
    </interactant>
    <interactant intactId="EBI-723792">
        <id>P13798</id>
        <label>APEH</label>
    </interactant>
    <organismsDiffer>false</organismsDiffer>
    <experiments>5</experiments>
</comment>
<comment type="interaction">
    <interactant intactId="EBI-945994">
        <id>P53990</id>
    </interactant>
    <interactant intactId="EBI-930964">
        <id>P54253</id>
        <label>ATXN1</label>
    </interactant>
    <organismsDiffer>false</organismsDiffer>
    <experiments>2</experiments>
</comment>
<comment type="interaction">
    <interactant intactId="EBI-945994">
        <id>P53990</id>
    </interactant>
    <interactant intactId="EBI-10213454">
        <id>Q7Z479</id>
        <label>CAPN7</label>
    </interactant>
    <organismsDiffer>false</organismsDiffer>
    <experiments>3</experiments>
</comment>
<comment type="interaction">
    <interactant intactId="EBI-945994">
        <id>P53990</id>
    </interactant>
    <interactant intactId="EBI-1765641">
        <id>Q9Y6W3</id>
        <label>CAPN7</label>
    </interactant>
    <organismsDiffer>false</organismsDiffer>
    <experiments>6</experiments>
</comment>
<comment type="interaction">
    <interactant intactId="EBI-945994">
        <id>P53990</id>
    </interactant>
    <interactant intactId="EBI-741480">
        <id>Q9UMX0</id>
        <label>UBQLN1</label>
    </interactant>
    <organismsDiffer>false</organismsDiffer>
    <experiments>3</experiments>
</comment>
<comment type="interaction">
    <interactant intactId="EBI-945994">
        <id>P53990</id>
    </interactant>
    <interactant intactId="EBI-9031083">
        <id>Q9Y2B5</id>
        <label>VPS9D1</label>
    </interactant>
    <organismsDiffer>false</organismsDiffer>
    <experiments>2</experiments>
</comment>
<comment type="interaction">
    <interactant intactId="EBI-4402971">
        <id>P53990-2</id>
    </interactant>
    <interactant intactId="EBI-930964">
        <id>P54253</id>
        <label>ATXN1</label>
    </interactant>
    <organismsDiffer>false</organismsDiffer>
    <experiments>6</experiments>
</comment>
<comment type="interaction">
    <interactant intactId="EBI-12188567">
        <id>P53990-3</id>
    </interactant>
    <interactant intactId="EBI-723792">
        <id>P13798</id>
        <label>APEH</label>
    </interactant>
    <organismsDiffer>false</organismsDiffer>
    <experiments>3</experiments>
</comment>
<comment type="interaction">
    <interactant intactId="EBI-12188567">
        <id>P53990-3</id>
    </interactant>
    <interactant intactId="EBI-930964">
        <id>P54253</id>
        <label>ATXN1</label>
    </interactant>
    <organismsDiffer>false</organismsDiffer>
    <experiments>9</experiments>
</comment>
<comment type="interaction">
    <interactant intactId="EBI-12188567">
        <id>P53990-3</id>
    </interactant>
    <interactant intactId="EBI-2949658">
        <id>O95429</id>
        <label>BAG4</label>
    </interactant>
    <organismsDiffer>false</organismsDiffer>
    <experiments>3</experiments>
</comment>
<comment type="interaction">
    <interactant intactId="EBI-12188567">
        <id>P53990-3</id>
    </interactant>
    <interactant intactId="EBI-1057156">
        <id>Q9HD42</id>
        <label>CHMP1A</label>
    </interactant>
    <organismsDiffer>false</organismsDiffer>
    <experiments>3</experiments>
</comment>
<comment type="interaction">
    <interactant intactId="EBI-12188567">
        <id>P53990-3</id>
    </interactant>
    <interactant intactId="EBI-741480">
        <id>Q9UMX0</id>
        <label>UBQLN1</label>
    </interactant>
    <organismsDiffer>false</organismsDiffer>
    <experiments>3</experiments>
</comment>
<comment type="interaction">
    <interactant intactId="EBI-12188567">
        <id>P53990-3</id>
    </interactant>
    <interactant intactId="EBI-947187">
        <id>Q9UHD9</id>
        <label>UBQLN2</label>
    </interactant>
    <organismsDiffer>false</organismsDiffer>
    <experiments>3</experiments>
</comment>
<comment type="interaction">
    <interactant intactId="EBI-15788863">
        <id>P53990-4</id>
    </interactant>
    <interactant intactId="EBI-2118090">
        <id>Q7LBR1</id>
        <label>CHMP1B</label>
    </interactant>
    <organismsDiffer>false</organismsDiffer>
    <experiments>3</experiments>
</comment>
<comment type="interaction">
    <interactant intactId="EBI-15788863">
        <id>P53990-4</id>
    </interactant>
    <interactant intactId="EBI-15788863">
        <id>P53990-4</id>
        <label>IST1</label>
    </interactant>
    <organismsDiffer>false</organismsDiffer>
    <experiments>2</experiments>
</comment>
<comment type="subcellular location">
    <subcellularLocation>
        <location evidence="2 3">Cytoplasmic vesicle</location>
    </subcellularLocation>
    <subcellularLocation>
        <location evidence="4">Cytoplasm</location>
        <location evidence="4">Cytoskeleton</location>
        <location evidence="4">Microtubule organizing center</location>
        <location evidence="4">Centrosome</location>
    </subcellularLocation>
    <subcellularLocation>
        <location evidence="4">Midbody</location>
    </subcellularLocation>
    <subcellularLocation>
        <location evidence="7 8">Nucleus envelope</location>
    </subcellularLocation>
    <text evidence="2 3 4 7 8">Localizes to centrosome and midbody of dividing cells (PubMed:19129479, PubMed:19129480, PubMed:20719964). Colocalized with SPART to the ends of Flemming bodies during cytokinesis (PubMed:20719964). Localizes to the reforming nuclear envelope on chromatin disks during late anaphase.</text>
</comment>
<comment type="alternative products">
    <event type="alternative splicing"/>
    <isoform>
        <id>P53990-1</id>
        <name>1</name>
        <sequence type="displayed"/>
    </isoform>
    <isoform>
        <id>P53990-2</id>
        <name>2</name>
        <sequence type="described" ref="VSP_017118 VSP_017119"/>
    </isoform>
    <isoform>
        <id>P53990-5</id>
        <name>5</name>
        <sequence type="described" ref="VSP_047075 VSP_047076"/>
    </isoform>
    <isoform>
        <id>P53990-4</id>
        <name>4</name>
        <sequence type="described" ref="VSP_017118"/>
    </isoform>
    <isoform>
        <id>P53990-3</id>
        <name>3</name>
        <sequence type="described" ref="VSP_017118 VSP_017120"/>
    </isoform>
    <isoform>
        <id>P53990-6</id>
        <name>6</name>
        <sequence type="described" ref="VSP_055118 VSP_017118"/>
    </isoform>
</comment>
<comment type="similarity">
    <text evidence="12">Belongs to the IST1 family.</text>
</comment>
<comment type="sequence caution" evidence="12">
    <conflict type="erroneous initiation">
        <sequence resource="EMBL-CDS" id="BAA11491"/>
    </conflict>
    <text>Extended N-terminus.</text>
</comment>
<name>IST1_HUMAN</name>
<accession>P53990</accession>
<accession>A8KAH5</accession>
<accession>J3QLU7</accession>
<accession>Q3SYM4</accession>
<accession>Q9BQ81</accession>
<accession>Q9BWN2</accession>